<feature type="chain" id="PRO_1000092908" description="Peptidyl-tRNA hydrolase">
    <location>
        <begin position="1"/>
        <end position="186"/>
    </location>
</feature>
<feature type="active site" description="Proton acceptor" evidence="1">
    <location>
        <position position="20"/>
    </location>
</feature>
<feature type="binding site" evidence="1">
    <location>
        <position position="15"/>
    </location>
    <ligand>
        <name>tRNA</name>
        <dbReference type="ChEBI" id="CHEBI:17843"/>
    </ligand>
</feature>
<feature type="binding site" evidence="1">
    <location>
        <position position="64"/>
    </location>
    <ligand>
        <name>tRNA</name>
        <dbReference type="ChEBI" id="CHEBI:17843"/>
    </ligand>
</feature>
<feature type="binding site" evidence="1">
    <location>
        <position position="66"/>
    </location>
    <ligand>
        <name>tRNA</name>
        <dbReference type="ChEBI" id="CHEBI:17843"/>
    </ligand>
</feature>
<feature type="binding site" evidence="1">
    <location>
        <position position="112"/>
    </location>
    <ligand>
        <name>tRNA</name>
        <dbReference type="ChEBI" id="CHEBI:17843"/>
    </ligand>
</feature>
<feature type="site" description="Discriminates between blocked and unblocked aminoacyl-tRNA" evidence="1">
    <location>
        <position position="10"/>
    </location>
</feature>
<feature type="site" description="Stabilizes the basic form of H active site to accept a proton" evidence="1">
    <location>
        <position position="91"/>
    </location>
</feature>
<accession>B6YQC2</accession>
<proteinExistence type="inferred from homology"/>
<organism>
    <name type="scientific">Azobacteroides pseudotrichonymphae genomovar. CFP2</name>
    <dbReference type="NCBI Taxonomy" id="511995"/>
    <lineage>
        <taxon>Bacteria</taxon>
        <taxon>Pseudomonadati</taxon>
        <taxon>Bacteroidota</taxon>
        <taxon>Bacteroidia</taxon>
        <taxon>Bacteroidales</taxon>
        <taxon>Candidatus Azobacteroides</taxon>
    </lineage>
</organism>
<dbReference type="EC" id="3.1.1.29" evidence="1"/>
<dbReference type="EMBL" id="AP010656">
    <property type="protein sequence ID" value="BAG83394.1"/>
    <property type="molecule type" value="Genomic_DNA"/>
</dbReference>
<dbReference type="RefSeq" id="WP_012573155.1">
    <property type="nucleotide sequence ID" value="NC_011565.1"/>
</dbReference>
<dbReference type="SMR" id="B6YQC2"/>
<dbReference type="STRING" id="511995.CFPG_131"/>
<dbReference type="KEGG" id="aps:CFPG_131"/>
<dbReference type="eggNOG" id="COG0193">
    <property type="taxonomic scope" value="Bacteria"/>
</dbReference>
<dbReference type="HOGENOM" id="CLU_062456_4_1_10"/>
<dbReference type="OrthoDB" id="9800507at2"/>
<dbReference type="Proteomes" id="UP000000723">
    <property type="component" value="Chromosome"/>
</dbReference>
<dbReference type="GO" id="GO:0005737">
    <property type="term" value="C:cytoplasm"/>
    <property type="evidence" value="ECO:0007669"/>
    <property type="project" value="UniProtKB-SubCell"/>
</dbReference>
<dbReference type="GO" id="GO:0004045">
    <property type="term" value="F:peptidyl-tRNA hydrolase activity"/>
    <property type="evidence" value="ECO:0007669"/>
    <property type="project" value="UniProtKB-UniRule"/>
</dbReference>
<dbReference type="GO" id="GO:0000049">
    <property type="term" value="F:tRNA binding"/>
    <property type="evidence" value="ECO:0007669"/>
    <property type="project" value="UniProtKB-UniRule"/>
</dbReference>
<dbReference type="GO" id="GO:0006515">
    <property type="term" value="P:protein quality control for misfolded or incompletely synthesized proteins"/>
    <property type="evidence" value="ECO:0007669"/>
    <property type="project" value="UniProtKB-UniRule"/>
</dbReference>
<dbReference type="GO" id="GO:0072344">
    <property type="term" value="P:rescue of stalled ribosome"/>
    <property type="evidence" value="ECO:0007669"/>
    <property type="project" value="UniProtKB-UniRule"/>
</dbReference>
<dbReference type="CDD" id="cd00462">
    <property type="entry name" value="PTH"/>
    <property type="match status" value="1"/>
</dbReference>
<dbReference type="FunFam" id="3.40.50.1470:FF:000001">
    <property type="entry name" value="Peptidyl-tRNA hydrolase"/>
    <property type="match status" value="1"/>
</dbReference>
<dbReference type="Gene3D" id="3.40.50.1470">
    <property type="entry name" value="Peptidyl-tRNA hydrolase"/>
    <property type="match status" value="1"/>
</dbReference>
<dbReference type="HAMAP" id="MF_00083">
    <property type="entry name" value="Pept_tRNA_hydro_bact"/>
    <property type="match status" value="1"/>
</dbReference>
<dbReference type="InterPro" id="IPR001328">
    <property type="entry name" value="Pept_tRNA_hydro"/>
</dbReference>
<dbReference type="InterPro" id="IPR018171">
    <property type="entry name" value="Pept_tRNA_hydro_CS"/>
</dbReference>
<dbReference type="InterPro" id="IPR036416">
    <property type="entry name" value="Pept_tRNA_hydro_sf"/>
</dbReference>
<dbReference type="NCBIfam" id="TIGR00447">
    <property type="entry name" value="pth"/>
    <property type="match status" value="1"/>
</dbReference>
<dbReference type="PANTHER" id="PTHR17224">
    <property type="entry name" value="PEPTIDYL-TRNA HYDROLASE"/>
    <property type="match status" value="1"/>
</dbReference>
<dbReference type="PANTHER" id="PTHR17224:SF1">
    <property type="entry name" value="PEPTIDYL-TRNA HYDROLASE"/>
    <property type="match status" value="1"/>
</dbReference>
<dbReference type="Pfam" id="PF01195">
    <property type="entry name" value="Pept_tRNA_hydro"/>
    <property type="match status" value="1"/>
</dbReference>
<dbReference type="SUPFAM" id="SSF53178">
    <property type="entry name" value="Peptidyl-tRNA hydrolase-like"/>
    <property type="match status" value="1"/>
</dbReference>
<dbReference type="PROSITE" id="PS01196">
    <property type="entry name" value="PEPT_TRNA_HYDROL_2"/>
    <property type="match status" value="1"/>
</dbReference>
<protein>
    <recommendedName>
        <fullName evidence="1">Peptidyl-tRNA hydrolase</fullName>
        <shortName evidence="1">Pth</shortName>
        <ecNumber evidence="1">3.1.1.29</ecNumber>
    </recommendedName>
</protein>
<keyword id="KW-0963">Cytoplasm</keyword>
<keyword id="KW-0378">Hydrolase</keyword>
<keyword id="KW-1185">Reference proteome</keyword>
<keyword id="KW-0694">RNA-binding</keyword>
<keyword id="KW-0820">tRNA-binding</keyword>
<comment type="function">
    <text evidence="1">Hydrolyzes ribosome-free peptidyl-tRNAs (with 1 or more amino acids incorporated), which drop off the ribosome during protein synthesis, or as a result of ribosome stalling.</text>
</comment>
<comment type="function">
    <text evidence="1">Catalyzes the release of premature peptidyl moieties from peptidyl-tRNA molecules trapped in stalled 50S ribosomal subunits, and thus maintains levels of free tRNAs and 50S ribosomes.</text>
</comment>
<comment type="catalytic activity">
    <reaction evidence="1">
        <text>an N-acyl-L-alpha-aminoacyl-tRNA + H2O = an N-acyl-L-amino acid + a tRNA + H(+)</text>
        <dbReference type="Rhea" id="RHEA:54448"/>
        <dbReference type="Rhea" id="RHEA-COMP:10123"/>
        <dbReference type="Rhea" id="RHEA-COMP:13883"/>
        <dbReference type="ChEBI" id="CHEBI:15377"/>
        <dbReference type="ChEBI" id="CHEBI:15378"/>
        <dbReference type="ChEBI" id="CHEBI:59874"/>
        <dbReference type="ChEBI" id="CHEBI:78442"/>
        <dbReference type="ChEBI" id="CHEBI:138191"/>
        <dbReference type="EC" id="3.1.1.29"/>
    </reaction>
</comment>
<comment type="subunit">
    <text evidence="1">Monomer.</text>
</comment>
<comment type="subcellular location">
    <subcellularLocation>
        <location evidence="1">Cytoplasm</location>
    </subcellularLocation>
</comment>
<comment type="similarity">
    <text evidence="1">Belongs to the PTH family.</text>
</comment>
<name>PTH_AZOPC</name>
<sequence length="186" mass="21101">MKYLVAGLGNVGQKYENSRHNIGFMILDALAKASSVVFTDKCYGAIASLKLKNKCLFLLKPSTYMNLSGNAIRYWLQKENIYSENLLILVDDLSLPFGSLRLKTKGSDGGHNGLKNIQYTLRTKYYNRLRFGIGNNFPSGCQINYVLDNFTKEEKKHLSERIEKAIEIVYSFCLSGSEITMNLFNK</sequence>
<evidence type="ECO:0000255" key="1">
    <source>
        <dbReference type="HAMAP-Rule" id="MF_00083"/>
    </source>
</evidence>
<gene>
    <name evidence="1" type="primary">pth</name>
    <name type="ordered locus">CFPG_131</name>
</gene>
<reference key="1">
    <citation type="journal article" date="2008" name="Science">
        <title>Genome of an endosymbiont coupling N2 fixation to cellulolysis within RT protist cells in termite gut.</title>
        <authorList>
            <person name="Hongoh Y."/>
            <person name="Sharma V.K."/>
            <person name="Prakash T."/>
            <person name="Noda S."/>
            <person name="Toh H."/>
            <person name="Taylor T.D."/>
            <person name="Kudo T."/>
            <person name="Sakaki Y."/>
            <person name="Toyoda A."/>
            <person name="Hattori M."/>
            <person name="Ohkuma M."/>
        </authorList>
    </citation>
    <scope>NUCLEOTIDE SEQUENCE [LARGE SCALE GENOMIC DNA]</scope>
</reference>